<protein>
    <recommendedName>
        <fullName evidence="2">UDP-N-acetylmuramoylalanine--D-glutamate ligase</fullName>
        <ecNumber evidence="2">6.3.2.9</ecNumber>
    </recommendedName>
    <alternativeName>
        <fullName evidence="2">D-glutamic acid-adding enzyme</fullName>
    </alternativeName>
    <alternativeName>
        <fullName evidence="2">UDP-N-acetylmuramoyl-L-alanyl-D-glutamate synthetase</fullName>
    </alternativeName>
</protein>
<keyword id="KW-0067">ATP-binding</keyword>
<keyword id="KW-0131">Cell cycle</keyword>
<keyword id="KW-0132">Cell division</keyword>
<keyword id="KW-0133">Cell shape</keyword>
<keyword id="KW-0961">Cell wall biogenesis/degradation</keyword>
<keyword id="KW-0963">Cytoplasm</keyword>
<keyword id="KW-0436">Ligase</keyword>
<keyword id="KW-0547">Nucleotide-binding</keyword>
<keyword id="KW-0573">Peptidoglycan synthesis</keyword>
<organism>
    <name type="scientific">Salmonella typhi</name>
    <dbReference type="NCBI Taxonomy" id="90370"/>
    <lineage>
        <taxon>Bacteria</taxon>
        <taxon>Pseudomonadati</taxon>
        <taxon>Pseudomonadota</taxon>
        <taxon>Gammaproteobacteria</taxon>
        <taxon>Enterobacterales</taxon>
        <taxon>Enterobacteriaceae</taxon>
        <taxon>Salmonella</taxon>
    </lineage>
</organism>
<reference key="1">
    <citation type="journal article" date="2001" name="Nature">
        <title>Complete genome sequence of a multiple drug resistant Salmonella enterica serovar Typhi CT18.</title>
        <authorList>
            <person name="Parkhill J."/>
            <person name="Dougan G."/>
            <person name="James K.D."/>
            <person name="Thomson N.R."/>
            <person name="Pickard D."/>
            <person name="Wain J."/>
            <person name="Churcher C.M."/>
            <person name="Mungall K.L."/>
            <person name="Bentley S.D."/>
            <person name="Holden M.T.G."/>
            <person name="Sebaihia M."/>
            <person name="Baker S."/>
            <person name="Basham D."/>
            <person name="Brooks K."/>
            <person name="Chillingworth T."/>
            <person name="Connerton P."/>
            <person name="Cronin A."/>
            <person name="Davis P."/>
            <person name="Davies R.M."/>
            <person name="Dowd L."/>
            <person name="White N."/>
            <person name="Farrar J."/>
            <person name="Feltwell T."/>
            <person name="Hamlin N."/>
            <person name="Haque A."/>
            <person name="Hien T.T."/>
            <person name="Holroyd S."/>
            <person name="Jagels K."/>
            <person name="Krogh A."/>
            <person name="Larsen T.S."/>
            <person name="Leather S."/>
            <person name="Moule S."/>
            <person name="O'Gaora P."/>
            <person name="Parry C."/>
            <person name="Quail M.A."/>
            <person name="Rutherford K.M."/>
            <person name="Simmonds M."/>
            <person name="Skelton J."/>
            <person name="Stevens K."/>
            <person name="Whitehead S."/>
            <person name="Barrell B.G."/>
        </authorList>
    </citation>
    <scope>NUCLEOTIDE SEQUENCE [LARGE SCALE GENOMIC DNA]</scope>
    <source>
        <strain>CT18</strain>
    </source>
</reference>
<reference key="2">
    <citation type="journal article" date="2003" name="J. Bacteriol.">
        <title>Comparative genomics of Salmonella enterica serovar Typhi strains Ty2 and CT18.</title>
        <authorList>
            <person name="Deng W."/>
            <person name="Liou S.-R."/>
            <person name="Plunkett G. III"/>
            <person name="Mayhew G.F."/>
            <person name="Rose D.J."/>
            <person name="Burland V."/>
            <person name="Kodoyianni V."/>
            <person name="Schwartz D.C."/>
            <person name="Blattner F.R."/>
        </authorList>
    </citation>
    <scope>NUCLEOTIDE SEQUENCE [LARGE SCALE GENOMIC DNA]</scope>
    <source>
        <strain>ATCC 700931 / Ty2</strain>
    </source>
</reference>
<comment type="function">
    <text evidence="2">Cell wall formation. Catalyzes the addition of glutamate to the nucleotide precursor UDP-N-acetylmuramoyl-L-alanine (UMA).</text>
</comment>
<comment type="catalytic activity">
    <reaction evidence="2">
        <text>UDP-N-acetyl-alpha-D-muramoyl-L-alanine + D-glutamate + ATP = UDP-N-acetyl-alpha-D-muramoyl-L-alanyl-D-glutamate + ADP + phosphate + H(+)</text>
        <dbReference type="Rhea" id="RHEA:16429"/>
        <dbReference type="ChEBI" id="CHEBI:15378"/>
        <dbReference type="ChEBI" id="CHEBI:29986"/>
        <dbReference type="ChEBI" id="CHEBI:30616"/>
        <dbReference type="ChEBI" id="CHEBI:43474"/>
        <dbReference type="ChEBI" id="CHEBI:83898"/>
        <dbReference type="ChEBI" id="CHEBI:83900"/>
        <dbReference type="ChEBI" id="CHEBI:456216"/>
        <dbReference type="EC" id="6.3.2.9"/>
    </reaction>
</comment>
<comment type="pathway">
    <text evidence="2">Cell wall biogenesis; peptidoglycan biosynthesis.</text>
</comment>
<comment type="subcellular location">
    <subcellularLocation>
        <location evidence="2">Cytoplasm</location>
    </subcellularLocation>
</comment>
<comment type="similarity">
    <text evidence="2">Belongs to the MurCDEF family.</text>
</comment>
<name>MURD_SALTI</name>
<feature type="initiator methionine" description="Removed" evidence="1">
    <location>
        <position position="1"/>
    </location>
</feature>
<feature type="chain" id="PRO_0000109077" description="UDP-N-acetylmuramoylalanine--D-glutamate ligase">
    <location>
        <begin position="2"/>
        <end position="438"/>
    </location>
</feature>
<feature type="binding site" evidence="2">
    <location>
        <begin position="112"/>
        <end position="118"/>
    </location>
    <ligand>
        <name>ATP</name>
        <dbReference type="ChEBI" id="CHEBI:30616"/>
    </ligand>
</feature>
<proteinExistence type="inferred from homology"/>
<dbReference type="EC" id="6.3.2.9" evidence="2"/>
<dbReference type="EMBL" id="AL513382">
    <property type="protein sequence ID" value="CAD01283.1"/>
    <property type="molecule type" value="Genomic_DNA"/>
</dbReference>
<dbReference type="EMBL" id="AE014613">
    <property type="protein sequence ID" value="AAO67862.1"/>
    <property type="molecule type" value="Genomic_DNA"/>
</dbReference>
<dbReference type="RefSeq" id="NP_454738.1">
    <property type="nucleotide sequence ID" value="NC_003198.1"/>
</dbReference>
<dbReference type="RefSeq" id="WP_000796441.1">
    <property type="nucleotide sequence ID" value="NZ_WSUR01000009.1"/>
</dbReference>
<dbReference type="SMR" id="Q8Z9H0"/>
<dbReference type="STRING" id="220341.gene:17584185"/>
<dbReference type="KEGG" id="stt:t0130"/>
<dbReference type="KEGG" id="sty:STY0146"/>
<dbReference type="PATRIC" id="fig|220341.7.peg.146"/>
<dbReference type="eggNOG" id="COG0771">
    <property type="taxonomic scope" value="Bacteria"/>
</dbReference>
<dbReference type="HOGENOM" id="CLU_032540_1_0_6"/>
<dbReference type="OMA" id="CSSFDMF"/>
<dbReference type="OrthoDB" id="9809796at2"/>
<dbReference type="UniPathway" id="UPA00219"/>
<dbReference type="Proteomes" id="UP000000541">
    <property type="component" value="Chromosome"/>
</dbReference>
<dbReference type="Proteomes" id="UP000002670">
    <property type="component" value="Chromosome"/>
</dbReference>
<dbReference type="GO" id="GO:0005737">
    <property type="term" value="C:cytoplasm"/>
    <property type="evidence" value="ECO:0007669"/>
    <property type="project" value="UniProtKB-SubCell"/>
</dbReference>
<dbReference type="GO" id="GO:0005524">
    <property type="term" value="F:ATP binding"/>
    <property type="evidence" value="ECO:0007669"/>
    <property type="project" value="UniProtKB-UniRule"/>
</dbReference>
<dbReference type="GO" id="GO:0008764">
    <property type="term" value="F:UDP-N-acetylmuramoylalanine-D-glutamate ligase activity"/>
    <property type="evidence" value="ECO:0007669"/>
    <property type="project" value="UniProtKB-UniRule"/>
</dbReference>
<dbReference type="GO" id="GO:0051301">
    <property type="term" value="P:cell division"/>
    <property type="evidence" value="ECO:0007669"/>
    <property type="project" value="UniProtKB-KW"/>
</dbReference>
<dbReference type="GO" id="GO:0071555">
    <property type="term" value="P:cell wall organization"/>
    <property type="evidence" value="ECO:0007669"/>
    <property type="project" value="UniProtKB-KW"/>
</dbReference>
<dbReference type="GO" id="GO:0009252">
    <property type="term" value="P:peptidoglycan biosynthetic process"/>
    <property type="evidence" value="ECO:0007669"/>
    <property type="project" value="UniProtKB-UniRule"/>
</dbReference>
<dbReference type="GO" id="GO:0008360">
    <property type="term" value="P:regulation of cell shape"/>
    <property type="evidence" value="ECO:0007669"/>
    <property type="project" value="UniProtKB-KW"/>
</dbReference>
<dbReference type="FunFam" id="3.40.1190.10:FF:000002">
    <property type="entry name" value="UDP-N-acetylmuramoylalanine--D-glutamate ligase"/>
    <property type="match status" value="1"/>
</dbReference>
<dbReference type="FunFam" id="3.40.50.720:FF:000126">
    <property type="entry name" value="UDP-N-acetylmuramoylalanine--D-glutamate ligase"/>
    <property type="match status" value="1"/>
</dbReference>
<dbReference type="FunFam" id="3.90.190.20:FF:000003">
    <property type="entry name" value="UDP-N-acetylmuramoylalanine--D-glutamate ligase"/>
    <property type="match status" value="1"/>
</dbReference>
<dbReference type="Gene3D" id="3.90.190.20">
    <property type="entry name" value="Mur ligase, C-terminal domain"/>
    <property type="match status" value="1"/>
</dbReference>
<dbReference type="Gene3D" id="3.40.1190.10">
    <property type="entry name" value="Mur-like, catalytic domain"/>
    <property type="match status" value="1"/>
</dbReference>
<dbReference type="Gene3D" id="3.40.50.720">
    <property type="entry name" value="NAD(P)-binding Rossmann-like Domain"/>
    <property type="match status" value="1"/>
</dbReference>
<dbReference type="HAMAP" id="MF_00639">
    <property type="entry name" value="MurD"/>
    <property type="match status" value="1"/>
</dbReference>
<dbReference type="InterPro" id="IPR036565">
    <property type="entry name" value="Mur-like_cat_sf"/>
</dbReference>
<dbReference type="InterPro" id="IPR004101">
    <property type="entry name" value="Mur_ligase_C"/>
</dbReference>
<dbReference type="InterPro" id="IPR036615">
    <property type="entry name" value="Mur_ligase_C_dom_sf"/>
</dbReference>
<dbReference type="InterPro" id="IPR013221">
    <property type="entry name" value="Mur_ligase_cen"/>
</dbReference>
<dbReference type="InterPro" id="IPR005762">
    <property type="entry name" value="MurD"/>
</dbReference>
<dbReference type="NCBIfam" id="TIGR01087">
    <property type="entry name" value="murD"/>
    <property type="match status" value="1"/>
</dbReference>
<dbReference type="PANTHER" id="PTHR43692">
    <property type="entry name" value="UDP-N-ACETYLMURAMOYLALANINE--D-GLUTAMATE LIGASE"/>
    <property type="match status" value="1"/>
</dbReference>
<dbReference type="PANTHER" id="PTHR43692:SF1">
    <property type="entry name" value="UDP-N-ACETYLMURAMOYLALANINE--D-GLUTAMATE LIGASE"/>
    <property type="match status" value="1"/>
</dbReference>
<dbReference type="Pfam" id="PF02875">
    <property type="entry name" value="Mur_ligase_C"/>
    <property type="match status" value="1"/>
</dbReference>
<dbReference type="Pfam" id="PF08245">
    <property type="entry name" value="Mur_ligase_M"/>
    <property type="match status" value="1"/>
</dbReference>
<dbReference type="Pfam" id="PF21799">
    <property type="entry name" value="MurD-like_N"/>
    <property type="match status" value="1"/>
</dbReference>
<dbReference type="SUPFAM" id="SSF51984">
    <property type="entry name" value="MurCD N-terminal domain"/>
    <property type="match status" value="1"/>
</dbReference>
<dbReference type="SUPFAM" id="SSF53623">
    <property type="entry name" value="MurD-like peptide ligases, catalytic domain"/>
    <property type="match status" value="1"/>
</dbReference>
<dbReference type="SUPFAM" id="SSF53244">
    <property type="entry name" value="MurD-like peptide ligases, peptide-binding domain"/>
    <property type="match status" value="1"/>
</dbReference>
<accession>Q8Z9H0</accession>
<gene>
    <name evidence="2" type="primary">murD</name>
    <name type="ordered locus">STY0146</name>
    <name type="ordered locus">t0130</name>
</gene>
<evidence type="ECO:0000250" key="1"/>
<evidence type="ECO:0000255" key="2">
    <source>
        <dbReference type="HAMAP-Rule" id="MF_00639"/>
    </source>
</evidence>
<sequence>MADYQDKNVVIIGLGLTGLSCVDFFLARGVTPRVMDTRVTPPGLDKLPQEVERHVGGLNDEWLLAADLIVASPGIALAHPSLSAAASAGVEIVGDIELFCREAQAPIVAITGSNGKSTVTTLVGEMAKAAGVNVGVGGNIGLPALMLLDADRELYVLELSSFQLETTSSLQAAAATVLNVTEDHMDRYPFGLQQYRAAKLRVYEKAKVCVVNADDALTMPVRGADERCVSFGVNMGDYHLNRQQGETWLRVKGEKVLNVKEMKLSGQHNYTNALAALALADAVGLPRASSLKALTTFTGLAHRFQLALEHNGVRWINDSKATNVGSTEAALNGLHVDGTLHLLLGGDGKSADFSPLARYLTGDRIRLYCFGRDGAQLAALRPEIAQQTETMEEAMRLLAPHVQPGDMVLLSPACASLDQFKNFEQRGDVFTRLAKELG</sequence>